<protein>
    <recommendedName>
        <fullName>F-box DNA helicase protein 1</fullName>
        <ecNumber>5.6.2.4</ecNumber>
    </recommendedName>
    <alternativeName>
        <fullName evidence="8">DNA 3'-5' helicase 1</fullName>
    </alternativeName>
</protein>
<reference key="1">
    <citation type="journal article" date="1997" name="J. Biol. Chem.">
        <title>A DNA helicase from Schizosaccharomyces pombe stimulated by single-stranded DNA-binding protein at low ATP concentration.</title>
        <authorList>
            <person name="Park J.S."/>
            <person name="Choi E."/>
            <person name="Lee S.-H."/>
            <person name="Lee C."/>
            <person name="Seo Y.-S."/>
        </authorList>
    </citation>
    <scope>NUCLEOTIDE SEQUENCE [GENOMIC DNA]</scope>
    <scope>FUNCTION</scope>
    <scope>COFACTOR</scope>
    <scope>INTERACTION WITH SSB1</scope>
    <source>
        <strain>972 / ATCC 24843</strain>
    </source>
</reference>
<reference key="2">
    <citation type="journal article" date="2005" name="Mol. Cell. Biol.">
        <title>Role of the Schizosaccharomyces pombe F-Box DNA helicase in processing recombination intermediates.</title>
        <authorList>
            <person name="Morishita T."/>
            <person name="Furukawa F."/>
            <person name="Sakaguchi C."/>
            <person name="Toda T."/>
            <person name="Carr A.M."/>
            <person name="Iwasaki H."/>
            <person name="Shinagawa H."/>
        </authorList>
    </citation>
    <scope>NUCLEOTIDE SEQUENCE [GENOMIC DNA]</scope>
    <scope>FUNCTION</scope>
    <scope>SUBCELLULAR LOCATION</scope>
</reference>
<reference key="3">
    <citation type="journal article" date="2002" name="Nature">
        <title>The genome sequence of Schizosaccharomyces pombe.</title>
        <authorList>
            <person name="Wood V."/>
            <person name="Gwilliam R."/>
            <person name="Rajandream M.A."/>
            <person name="Lyne M.H."/>
            <person name="Lyne R."/>
            <person name="Stewart A."/>
            <person name="Sgouros J.G."/>
            <person name="Peat N."/>
            <person name="Hayles J."/>
            <person name="Baker S.G."/>
            <person name="Basham D."/>
            <person name="Bowman S."/>
            <person name="Brooks K."/>
            <person name="Brown D."/>
            <person name="Brown S."/>
            <person name="Chillingworth T."/>
            <person name="Churcher C.M."/>
            <person name="Collins M."/>
            <person name="Connor R."/>
            <person name="Cronin A."/>
            <person name="Davis P."/>
            <person name="Feltwell T."/>
            <person name="Fraser A."/>
            <person name="Gentles S."/>
            <person name="Goble A."/>
            <person name="Hamlin N."/>
            <person name="Harris D.E."/>
            <person name="Hidalgo J."/>
            <person name="Hodgson G."/>
            <person name="Holroyd S."/>
            <person name="Hornsby T."/>
            <person name="Howarth S."/>
            <person name="Huckle E.J."/>
            <person name="Hunt S."/>
            <person name="Jagels K."/>
            <person name="James K.D."/>
            <person name="Jones L."/>
            <person name="Jones M."/>
            <person name="Leather S."/>
            <person name="McDonald S."/>
            <person name="McLean J."/>
            <person name="Mooney P."/>
            <person name="Moule S."/>
            <person name="Mungall K.L."/>
            <person name="Murphy L.D."/>
            <person name="Niblett D."/>
            <person name="Odell C."/>
            <person name="Oliver K."/>
            <person name="O'Neil S."/>
            <person name="Pearson D."/>
            <person name="Quail M.A."/>
            <person name="Rabbinowitsch E."/>
            <person name="Rutherford K.M."/>
            <person name="Rutter S."/>
            <person name="Saunders D."/>
            <person name="Seeger K."/>
            <person name="Sharp S."/>
            <person name="Skelton J."/>
            <person name="Simmonds M.N."/>
            <person name="Squares R."/>
            <person name="Squares S."/>
            <person name="Stevens K."/>
            <person name="Taylor K."/>
            <person name="Taylor R.G."/>
            <person name="Tivey A."/>
            <person name="Walsh S.V."/>
            <person name="Warren T."/>
            <person name="Whitehead S."/>
            <person name="Woodward J.R."/>
            <person name="Volckaert G."/>
            <person name="Aert R."/>
            <person name="Robben J."/>
            <person name="Grymonprez B."/>
            <person name="Weltjens I."/>
            <person name="Vanstreels E."/>
            <person name="Rieger M."/>
            <person name="Schaefer M."/>
            <person name="Mueller-Auer S."/>
            <person name="Gabel C."/>
            <person name="Fuchs M."/>
            <person name="Duesterhoeft A."/>
            <person name="Fritzc C."/>
            <person name="Holzer E."/>
            <person name="Moestl D."/>
            <person name="Hilbert H."/>
            <person name="Borzym K."/>
            <person name="Langer I."/>
            <person name="Beck A."/>
            <person name="Lehrach H."/>
            <person name="Reinhardt R."/>
            <person name="Pohl T.M."/>
            <person name="Eger P."/>
            <person name="Zimmermann W."/>
            <person name="Wedler H."/>
            <person name="Wambutt R."/>
            <person name="Purnelle B."/>
            <person name="Goffeau A."/>
            <person name="Cadieu E."/>
            <person name="Dreano S."/>
            <person name="Gloux S."/>
            <person name="Lelaure V."/>
            <person name="Mottier S."/>
            <person name="Galibert F."/>
            <person name="Aves S.J."/>
            <person name="Xiang Z."/>
            <person name="Hunt C."/>
            <person name="Moore K."/>
            <person name="Hurst S.M."/>
            <person name="Lucas M."/>
            <person name="Rochet M."/>
            <person name="Gaillardin C."/>
            <person name="Tallada V.A."/>
            <person name="Garzon A."/>
            <person name="Thode G."/>
            <person name="Daga R.R."/>
            <person name="Cruzado L."/>
            <person name="Jimenez J."/>
            <person name="Sanchez M."/>
            <person name="del Rey F."/>
            <person name="Benito J."/>
            <person name="Dominguez A."/>
            <person name="Revuelta J.L."/>
            <person name="Moreno S."/>
            <person name="Armstrong J."/>
            <person name="Forsburg S.L."/>
            <person name="Cerutti L."/>
            <person name="Lowe T."/>
            <person name="McCombie W.R."/>
            <person name="Paulsen I."/>
            <person name="Potashkin J."/>
            <person name="Shpakovski G.V."/>
            <person name="Ussery D."/>
            <person name="Barrell B.G."/>
            <person name="Nurse P."/>
        </authorList>
    </citation>
    <scope>NUCLEOTIDE SEQUENCE [LARGE SCALE GENOMIC DNA]</scope>
    <source>
        <strain>972 / ATCC 24843</strain>
    </source>
</reference>
<reference key="4">
    <citation type="journal article" date="2004" name="Genes Cells">
        <title>Molecular interactions of fission yeast Skp1 and its role in the DNA damage checkpoint.</title>
        <authorList>
            <person name="Lehmann A."/>
            <person name="Katayama S."/>
            <person name="Harrison C."/>
            <person name="Dhut S."/>
            <person name="Kitamura K."/>
            <person name="McDonald N."/>
            <person name="Toda T."/>
        </authorList>
    </citation>
    <scope>INTERACTION WITH SKP1</scope>
</reference>
<reference key="5">
    <citation type="journal article" date="2005" name="Mol. Cell. Biol.">
        <title>The F-Box DNA helicase Fbh1 prevents Rhp51-dependent recombination without mediator proteins.</title>
        <authorList>
            <person name="Osman F."/>
            <person name="Dixon J."/>
            <person name="Barr A.R."/>
            <person name="Whitby M.C."/>
        </authorList>
    </citation>
    <scope>FUNCTION</scope>
    <scope>SUBCELLULAR LOCATION</scope>
    <scope>MUTAGENESIS OF LEU-14; PRO-15 AND ASP-485</scope>
</reference>
<reference key="6">
    <citation type="journal article" date="2006" name="Nat. Biotechnol.">
        <title>ORFeome cloning and global analysis of protein localization in the fission yeast Schizosaccharomyces pombe.</title>
        <authorList>
            <person name="Matsuyama A."/>
            <person name="Arai R."/>
            <person name="Yashiroda Y."/>
            <person name="Shirai A."/>
            <person name="Kamata A."/>
            <person name="Sekido S."/>
            <person name="Kobayashi Y."/>
            <person name="Hashimoto A."/>
            <person name="Hamamoto M."/>
            <person name="Hiraoka Y."/>
            <person name="Horinouchi S."/>
            <person name="Yoshida M."/>
        </authorList>
    </citation>
    <scope>SUBCELLULAR LOCATION [LARGE SCALE ANALYSIS]</scope>
</reference>
<reference key="7">
    <citation type="journal article" date="2009" name="Mol. Cell. Biol.">
        <title>Fbh1 limits Rad51-dependent recombination at blocked replication forks.</title>
        <authorList>
            <person name="Lorenz A."/>
            <person name="Osman F."/>
            <person name="Folkyte V."/>
            <person name="Sofueva S."/>
            <person name="Whitby M.C."/>
        </authorList>
    </citation>
    <scope>FUNCTION</scope>
</reference>
<proteinExistence type="evidence at protein level"/>
<evidence type="ECO:0000255" key="1"/>
<evidence type="ECO:0000255" key="2">
    <source>
        <dbReference type="PROSITE-ProRule" id="PRU00080"/>
    </source>
</evidence>
<evidence type="ECO:0000269" key="3">
    <source>
    </source>
</evidence>
<evidence type="ECO:0000269" key="4">
    <source>
    </source>
</evidence>
<evidence type="ECO:0000269" key="5">
    <source>
    </source>
</evidence>
<evidence type="ECO:0000269" key="6">
    <source>
    </source>
</evidence>
<evidence type="ECO:0000269" key="7">
    <source>
    </source>
</evidence>
<evidence type="ECO:0000305" key="8"/>
<evidence type="ECO:0000312" key="9">
    <source>
        <dbReference type="EMBL" id="CAC44128.1"/>
    </source>
</evidence>
<gene>
    <name type="primary">fbh1</name>
    <name evidence="9" type="synonym">fdh</name>
    <name evidence="9" type="synonym">fdh1</name>
    <name type="ORF">SPBC336.01</name>
</gene>
<accession>Q9USU3</accession>
<name>FBH1_SCHPO</name>
<dbReference type="EC" id="5.6.2.4"/>
<dbReference type="EMBL" id="AF380117">
    <property type="protein sequence ID" value="AAK58077.1"/>
    <property type="molecule type" value="Genomic_DNA"/>
</dbReference>
<dbReference type="EMBL" id="CU329671">
    <property type="protein sequence ID" value="CAC44128.1"/>
    <property type="molecule type" value="Genomic_DNA"/>
</dbReference>
<dbReference type="RefSeq" id="NP_596121.3">
    <property type="nucleotide sequence ID" value="NM_001022039.3"/>
</dbReference>
<dbReference type="BioGRID" id="276776">
    <property type="interactions" value="63"/>
</dbReference>
<dbReference type="FunCoup" id="Q9USU3">
    <property type="interactions" value="331"/>
</dbReference>
<dbReference type="IntAct" id="Q9USU3">
    <property type="interactions" value="1"/>
</dbReference>
<dbReference type="STRING" id="284812.Q9USU3"/>
<dbReference type="PaxDb" id="4896-SPBC336.01.1"/>
<dbReference type="EnsemblFungi" id="SPBC336.01.1">
    <property type="protein sequence ID" value="SPBC336.01.1:pep"/>
    <property type="gene ID" value="SPBC336.01"/>
</dbReference>
<dbReference type="GeneID" id="2540244"/>
<dbReference type="KEGG" id="spo:2540244"/>
<dbReference type="PomBase" id="SPBC336.01">
    <property type="gene designation" value="fbh1"/>
</dbReference>
<dbReference type="VEuPathDB" id="FungiDB:SPBC336.01"/>
<dbReference type="eggNOG" id="KOG2108">
    <property type="taxonomic scope" value="Eukaryota"/>
</dbReference>
<dbReference type="HOGENOM" id="CLU_329036_0_0_1"/>
<dbReference type="InParanoid" id="Q9USU3"/>
<dbReference type="OMA" id="YRQKHAR"/>
<dbReference type="PhylomeDB" id="Q9USU3"/>
<dbReference type="UniPathway" id="UPA00143"/>
<dbReference type="PRO" id="PR:Q9USU3"/>
<dbReference type="Proteomes" id="UP000002485">
    <property type="component" value="Chromosome II"/>
</dbReference>
<dbReference type="GO" id="GO:0005829">
    <property type="term" value="C:cytosol"/>
    <property type="evidence" value="ECO:0007005"/>
    <property type="project" value="PomBase"/>
</dbReference>
<dbReference type="GO" id="GO:0043224">
    <property type="term" value="C:nuclear SCF ubiquitin ligase complex"/>
    <property type="evidence" value="ECO:0000314"/>
    <property type="project" value="PomBase"/>
</dbReference>
<dbReference type="GO" id="GO:0005634">
    <property type="term" value="C:nucleus"/>
    <property type="evidence" value="ECO:0000314"/>
    <property type="project" value="PomBase"/>
</dbReference>
<dbReference type="GO" id="GO:0017117">
    <property type="term" value="C:single-stranded DNA-dependent ATP-dependent DNA helicase complex"/>
    <property type="evidence" value="ECO:0000314"/>
    <property type="project" value="PomBase"/>
</dbReference>
<dbReference type="GO" id="GO:0043138">
    <property type="term" value="F:3'-5' DNA helicase activity"/>
    <property type="evidence" value="ECO:0000318"/>
    <property type="project" value="GO_Central"/>
</dbReference>
<dbReference type="GO" id="GO:0005524">
    <property type="term" value="F:ATP binding"/>
    <property type="evidence" value="ECO:0007669"/>
    <property type="project" value="UniProtKB-KW"/>
</dbReference>
<dbReference type="GO" id="GO:0016887">
    <property type="term" value="F:ATP hydrolysis activity"/>
    <property type="evidence" value="ECO:0007669"/>
    <property type="project" value="RHEA"/>
</dbReference>
<dbReference type="GO" id="GO:1990518">
    <property type="term" value="F:single-stranded 3'-5' DNA helicase activity"/>
    <property type="evidence" value="ECO:0000314"/>
    <property type="project" value="PomBase"/>
</dbReference>
<dbReference type="GO" id="GO:0003697">
    <property type="term" value="F:single-stranded DNA binding"/>
    <property type="evidence" value="ECO:0000314"/>
    <property type="project" value="PomBase"/>
</dbReference>
<dbReference type="GO" id="GO:1990756">
    <property type="term" value="F:ubiquitin-like ligase-substrate adaptor activity"/>
    <property type="evidence" value="ECO:0000353"/>
    <property type="project" value="PomBase"/>
</dbReference>
<dbReference type="GO" id="GO:0006310">
    <property type="term" value="P:DNA recombination"/>
    <property type="evidence" value="ECO:0000316"/>
    <property type="project" value="PomBase"/>
</dbReference>
<dbReference type="GO" id="GO:0000724">
    <property type="term" value="P:double-strand break repair via homologous recombination"/>
    <property type="evidence" value="ECO:0000316"/>
    <property type="project" value="PomBase"/>
</dbReference>
<dbReference type="GO" id="GO:1990426">
    <property type="term" value="P:mitotic recombination-dependent replication fork processing"/>
    <property type="evidence" value="ECO:0000315"/>
    <property type="project" value="PomBase"/>
</dbReference>
<dbReference type="GO" id="GO:0016567">
    <property type="term" value="P:protein ubiquitination"/>
    <property type="evidence" value="ECO:0007669"/>
    <property type="project" value="UniProtKB-UniPathway"/>
</dbReference>
<dbReference type="GO" id="GO:0000018">
    <property type="term" value="P:regulation of DNA recombination"/>
    <property type="evidence" value="ECO:0000314"/>
    <property type="project" value="PomBase"/>
</dbReference>
<dbReference type="GO" id="GO:0031297">
    <property type="term" value="P:replication fork processing"/>
    <property type="evidence" value="ECO:0000315"/>
    <property type="project" value="PomBase"/>
</dbReference>
<dbReference type="GO" id="GO:0000712">
    <property type="term" value="P:resolution of meiotic recombination intermediates"/>
    <property type="evidence" value="ECO:0000315"/>
    <property type="project" value="PomBase"/>
</dbReference>
<dbReference type="GO" id="GO:0031146">
    <property type="term" value="P:SCF-dependent proteasomal ubiquitin-dependent protein catabolic process"/>
    <property type="evidence" value="ECO:0000314"/>
    <property type="project" value="PomBase"/>
</dbReference>
<dbReference type="CDD" id="cd17932">
    <property type="entry name" value="DEXQc_UvrD"/>
    <property type="match status" value="1"/>
</dbReference>
<dbReference type="FunFam" id="3.40.50.300:FF:005416">
    <property type="entry name" value="Chromosome 10, whole genome shotgun sequence"/>
    <property type="match status" value="1"/>
</dbReference>
<dbReference type="FunFam" id="3.40.50.300:FF:005425">
    <property type="entry name" value="Chromosome 10, whole genome shotgun sequence"/>
    <property type="match status" value="1"/>
</dbReference>
<dbReference type="Gene3D" id="3.40.50.300">
    <property type="entry name" value="P-loop containing nucleotide triphosphate hydrolases"/>
    <property type="match status" value="2"/>
</dbReference>
<dbReference type="InterPro" id="IPR014017">
    <property type="entry name" value="DNA_helicase_UvrD-like_C"/>
</dbReference>
<dbReference type="InterPro" id="IPR000212">
    <property type="entry name" value="DNA_helicase_UvrD/REP"/>
</dbReference>
<dbReference type="InterPro" id="IPR001810">
    <property type="entry name" value="F-box_dom"/>
</dbReference>
<dbReference type="InterPro" id="IPR027417">
    <property type="entry name" value="P-loop_NTPase"/>
</dbReference>
<dbReference type="InterPro" id="IPR014016">
    <property type="entry name" value="UvrD-like_ATP-bd"/>
</dbReference>
<dbReference type="PANTHER" id="PTHR11070:SF30">
    <property type="entry name" value="F-BOX DNA HELICASE 1"/>
    <property type="match status" value="1"/>
</dbReference>
<dbReference type="PANTHER" id="PTHR11070">
    <property type="entry name" value="UVRD / RECB / PCRA DNA HELICASE FAMILY MEMBER"/>
    <property type="match status" value="1"/>
</dbReference>
<dbReference type="Pfam" id="PF00580">
    <property type="entry name" value="UvrD-helicase"/>
    <property type="match status" value="1"/>
</dbReference>
<dbReference type="Pfam" id="PF13361">
    <property type="entry name" value="UvrD_C"/>
    <property type="match status" value="1"/>
</dbReference>
<dbReference type="SUPFAM" id="SSF52540">
    <property type="entry name" value="P-loop containing nucleoside triphosphate hydrolases"/>
    <property type="match status" value="1"/>
</dbReference>
<dbReference type="PROSITE" id="PS50181">
    <property type="entry name" value="FBOX"/>
    <property type="match status" value="1"/>
</dbReference>
<feature type="chain" id="PRO_0000271430" description="F-box DNA helicase protein 1">
    <location>
        <begin position="1"/>
        <end position="878"/>
    </location>
</feature>
<feature type="domain" description="F-box" evidence="2">
    <location>
        <begin position="8"/>
        <end position="56"/>
    </location>
</feature>
<feature type="mutagenesis site" description="Modest reduction in DNA helicase activity; when in combination with A-15." evidence="5">
    <original>L</original>
    <variation>A</variation>
    <location>
        <position position="14"/>
    </location>
</feature>
<feature type="mutagenesis site" description="Modest reduction in DNA helicase activity; when in combination with A-14." evidence="5">
    <original>P</original>
    <variation>A</variation>
    <location>
        <position position="15"/>
    </location>
</feature>
<feature type="mutagenesis site" description="Prevents DNA helicase activity." evidence="5">
    <original>D</original>
    <variation>N</variation>
    <location>
        <position position="485"/>
    </location>
</feature>
<comment type="function">
    <text evidence="4 5 6 7">Involved in ATP-dependent DNA-unwinding in a 3' to 5' direction, and ATP-ase activities stimulated by the single-stranded DNA-binding protein ssb1. Essential for viability and normal growth of stationary phase cells and in the absence of either srs2 or rqh1 DNA helicase (PubMed:16135799, PubMed:9228070). Involved in DNA recombination repair of strand breaks and stalled or collapsed replication forks, on the rhp51-dependent pathway: promotes rhp51 filament dissolution from stalled forks, thereby inhibiting homologous recombination and preventing excessive recombination (PubMed:16135800, PubMed:19546232). Ubiquitination and DNA helicase activities are essential for controlling rhp51-dependent recombination in the absence of rad22. Plays a role in the processing of toxic recombination intermediates. Promotes proper chromosome segregation (PubMed:16135799, PubMed:16135800, PubMed:19546232, PubMed:9228070).</text>
</comment>
<comment type="catalytic activity">
    <reaction>
        <text>Couples ATP hydrolysis with the unwinding of duplex DNA by translocating in the 3'-5' direction.</text>
        <dbReference type="EC" id="5.6.2.4"/>
    </reaction>
</comment>
<comment type="catalytic activity">
    <reaction>
        <text>ATP + H2O = ADP + phosphate + H(+)</text>
        <dbReference type="Rhea" id="RHEA:13065"/>
        <dbReference type="ChEBI" id="CHEBI:15377"/>
        <dbReference type="ChEBI" id="CHEBI:15378"/>
        <dbReference type="ChEBI" id="CHEBI:30616"/>
        <dbReference type="ChEBI" id="CHEBI:43474"/>
        <dbReference type="ChEBI" id="CHEBI:456216"/>
        <dbReference type="EC" id="5.6.2.4"/>
    </reaction>
</comment>
<comment type="cofactor">
    <cofactor evidence="7">
        <name>Mg(2+)</name>
        <dbReference type="ChEBI" id="CHEBI:18420"/>
    </cofactor>
    <cofactor evidence="7">
        <name>Mn(2+)</name>
        <dbReference type="ChEBI" id="CHEBI:29035"/>
    </cofactor>
</comment>
<comment type="pathway">
    <text>Protein modification; protein ubiquitination.</text>
</comment>
<comment type="subunit">
    <text evidence="3 7">Part of the E3 ubiquitin ligase Skp1-Cullin-1-F-box (SCF) complex. Interacts with skp1 and ssb1.</text>
</comment>
<comment type="subcellular location">
    <subcellularLocation>
        <location>Cytoplasm</location>
    </subcellularLocation>
    <subcellularLocation>
        <location>Nucleus</location>
    </subcellularLocation>
    <text>Becomes localized at discrete nuclear foci together with rhp51, in response to DNA strand breakage.</text>
</comment>
<comment type="similarity">
    <text evidence="1">Belongs to the helicase family. UvrD subfamily.</text>
</comment>
<sequence>MSAQHLHSCKFYRLPLEIIPLICRFLSVQDIQSFIRVFPSFQTILDSSNDLFWKKKNYELRIRRNRLLRGSYAAGVSSSAMNGFVNGTQISSTPAEREYYSKSDEIKNICGLPPGPMKVEQIGHAIDHLVSETHTVDHLGSSIKASFFHIDDVPLEWISSICMQVQSFFSPAAREAISSLKSRTTTSNLLLSLFVGILFEDDLWYFFNTLYMLSSTSAIEFAYFLDSIFTVVRTDYEHYRDPLSQTLITSCTRIHNIVAVIESPYDEPNTKGLTSEQKMIVECQLNPGEVLKVKAFAGTGKTKALLEFAKSRPKDKILYVAFNKAAKEDAELRFPFNVKCSTMHGLAYGAILAQADLPQAKLERQLSNSTIASLLSLQVAFPKANRKNNPGTPSASLVASHIMFTLNRFMHSTDWQLGFRHISKRSLEVTKLSKEKLLAYTKKLWSLIVNFEYTHAPLIPDAYMKLLHLYEFPNIFSKYDYILFDEAQDFTPCMVDLIYRQKHARIVIVGDAHQCIYGFRGANACAFNENLYPSTKQLCLTKSFRFGNSVAKYANFLLSLKGENVKLKGVQNDHAYWSSASNPNNVSGAFRFFPHTIIFRTNKELILQSIRLSVSLPKEIPIAILGSMRKKAFQLLRSGSELAHGQRPSHPKLKDFSSWGEFEVHVKNSAEEDAELALVYDMADELFSESFLSRLDNCEKRLMDSKDDGDNGIILATAHQSKGLEWDNVQLGNDFRPKFDSVSFSRIGSSRYLQEEINILYVALTRAKKRLILNDTITKLYALECGLVRFAGGILTEDQLQPGKVALFVDWQIDKFSFFYETPAEGYNLLVEANEKSVWDIFFGVLSGAWQNYIANTSERLKRSMLFIENQLFAVHDQ</sequence>
<organism>
    <name type="scientific">Schizosaccharomyces pombe (strain 972 / ATCC 24843)</name>
    <name type="common">Fission yeast</name>
    <dbReference type="NCBI Taxonomy" id="284812"/>
    <lineage>
        <taxon>Eukaryota</taxon>
        <taxon>Fungi</taxon>
        <taxon>Dikarya</taxon>
        <taxon>Ascomycota</taxon>
        <taxon>Taphrinomycotina</taxon>
        <taxon>Schizosaccharomycetes</taxon>
        <taxon>Schizosaccharomycetales</taxon>
        <taxon>Schizosaccharomycetaceae</taxon>
        <taxon>Schizosaccharomyces</taxon>
    </lineage>
</organism>
<keyword id="KW-0067">ATP-binding</keyword>
<keyword id="KW-0963">Cytoplasm</keyword>
<keyword id="KW-0227">DNA damage</keyword>
<keyword id="KW-0234">DNA repair</keyword>
<keyword id="KW-0238">DNA-binding</keyword>
<keyword id="KW-0347">Helicase</keyword>
<keyword id="KW-0378">Hydrolase</keyword>
<keyword id="KW-0413">Isomerase</keyword>
<keyword id="KW-0460">Magnesium</keyword>
<keyword id="KW-0464">Manganese</keyword>
<keyword id="KW-0547">Nucleotide-binding</keyword>
<keyword id="KW-0539">Nucleus</keyword>
<keyword id="KW-1185">Reference proteome</keyword>
<keyword id="KW-0833">Ubl conjugation pathway</keyword>